<accession>P22928</accession>
<gene>
    <name type="primary">CHSJ</name>
</gene>
<evidence type="ECO:0000255" key="1">
    <source>
        <dbReference type="PROSITE-ProRule" id="PRU10023"/>
    </source>
</evidence>
<evidence type="ECO:0000305" key="2"/>
<sequence>MVTVEEIRRAQRAEGPATIMAIGTATPSNCVDQSTYPDYYFRITNSEHKTELKEKFQRMCDKSMIKKRYMHLTEEILKENPNICEYMAPSLDARQDIVVVEVPKLGKEAAQKAIKEWGQPKSKITHLVFCTTSGVDMPGADYQLTKLLGLRSSVKRLMMYQQGCFAGGTVLRLAKDLAENNKGARVLVVCSEITAVTFRGPNDTHLDSLVGQALFGDGAAAIIIGSDPLPGVERPLFELVSASQTLLPDSEGAIDGHLREVGLTFHLLKDVPGLISKNIQKSLVEAFQPLGISDWNSIFWIAHPGGPAILDQVELKLGLKPEKLRATRHVLSEYGNMSSACVLFILDEMRKASSKEGLGTTGEGLEWGVLFGFGPGLTVETVVLHSVST</sequence>
<comment type="function">
    <text>The primary product of this enzyme is 4,2',4',6'-tetrahydroxychalcone (also termed naringenin-chalcone or chalcone) which can under specific conditions spontaneously isomerize into naringenin.</text>
</comment>
<comment type="catalytic activity">
    <reaction evidence="1">
        <text>(E)-4-coumaroyl-CoA + 3 malonyl-CoA + 3 H(+) = 2',4,4',6'-tetrahydroxychalcone + 3 CO2 + 4 CoA</text>
        <dbReference type="Rhea" id="RHEA:11128"/>
        <dbReference type="ChEBI" id="CHEBI:15378"/>
        <dbReference type="ChEBI" id="CHEBI:15413"/>
        <dbReference type="ChEBI" id="CHEBI:16526"/>
        <dbReference type="ChEBI" id="CHEBI:57287"/>
        <dbReference type="ChEBI" id="CHEBI:57384"/>
        <dbReference type="ChEBI" id="CHEBI:85008"/>
        <dbReference type="EC" id="2.3.1.74"/>
    </reaction>
</comment>
<comment type="pathway">
    <text>Secondary metabolite biosynthesis; flavonoid biosynthesis.</text>
</comment>
<comment type="similarity">
    <text evidence="2">Belongs to the thiolase-like superfamily. Chalcone/stilbene synthases family.</text>
</comment>
<feature type="chain" id="PRO_0000216034" description="Chalcone synthase J">
    <location>
        <begin position="1"/>
        <end position="389"/>
    </location>
</feature>
<feature type="active site" evidence="1">
    <location>
        <position position="164"/>
    </location>
</feature>
<feature type="sequence conflict" description="In Ref. 2; CAA32739." evidence="2" ref="2">
    <original>E</original>
    <variation>V</variation>
    <location>
        <position position="75"/>
    </location>
</feature>
<proteinExistence type="evidence at transcript level"/>
<reference key="1">
    <citation type="journal article" date="1989" name="Gene">
        <title>Cloning and molecular characterization of the chalcone synthase multigene family of Petunia hybrida.</title>
        <authorList>
            <person name="Koes R.E."/>
            <person name="Spelt C.E."/>
            <person name="van den Elzen P.J.M."/>
            <person name="Mol J.N.M."/>
        </authorList>
    </citation>
    <scope>NUCLEOTIDE SEQUENCE [GENOMIC DNA]</scope>
    <source>
        <strain>cv. Violet 30</strain>
        <tissue>Leaf</tissue>
    </source>
</reference>
<reference key="2">
    <citation type="submission" date="1989-03" db="EMBL/GenBank/DDBJ databases">
        <authorList>
            <person name="van Tunen A.J."/>
        </authorList>
    </citation>
    <scope>NUCLEOTIDE SEQUENCE [MRNA] OF 71-389</scope>
    <source>
        <strain>cv. White 137</strain>
        <tissue>Anther</tissue>
    </source>
</reference>
<protein>
    <recommendedName>
        <fullName>Chalcone synthase J</fullName>
        <ecNumber>2.3.1.74</ecNumber>
    </recommendedName>
    <alternativeName>
        <fullName>Naringenin-chalcone synthase J</fullName>
    </alternativeName>
</protein>
<dbReference type="EC" id="2.3.1.74"/>
<dbReference type="EMBL" id="X14597">
    <property type="protein sequence ID" value="CAA32737.1"/>
    <property type="molecule type" value="Genomic_DNA"/>
</dbReference>
<dbReference type="EMBL" id="X14599">
    <property type="protein sequence ID" value="CAA32739.1"/>
    <property type="molecule type" value="mRNA"/>
</dbReference>
<dbReference type="PIR" id="D72821">
    <property type="entry name" value="SYPJCJ"/>
</dbReference>
<dbReference type="PIR" id="S18136">
    <property type="entry name" value="S18136"/>
</dbReference>
<dbReference type="SMR" id="P22928"/>
<dbReference type="UniPathway" id="UPA00154"/>
<dbReference type="GO" id="GO:0016210">
    <property type="term" value="F:naringenin-chalcone synthase activity"/>
    <property type="evidence" value="ECO:0007669"/>
    <property type="project" value="UniProtKB-EC"/>
</dbReference>
<dbReference type="GO" id="GO:0009813">
    <property type="term" value="P:flavonoid biosynthetic process"/>
    <property type="evidence" value="ECO:0007669"/>
    <property type="project" value="UniProtKB-UniPathway"/>
</dbReference>
<dbReference type="GO" id="GO:0030639">
    <property type="term" value="P:polyketide biosynthetic process"/>
    <property type="evidence" value="ECO:0007669"/>
    <property type="project" value="TreeGrafter"/>
</dbReference>
<dbReference type="CDD" id="cd00831">
    <property type="entry name" value="CHS_like"/>
    <property type="match status" value="1"/>
</dbReference>
<dbReference type="FunFam" id="3.40.47.10:FF:000014">
    <property type="entry name" value="Chalcone synthase 1"/>
    <property type="match status" value="1"/>
</dbReference>
<dbReference type="FunFam" id="3.40.47.10:FF:000025">
    <property type="entry name" value="Chalcone synthase 2"/>
    <property type="match status" value="1"/>
</dbReference>
<dbReference type="Gene3D" id="3.40.47.10">
    <property type="match status" value="2"/>
</dbReference>
<dbReference type="InterPro" id="IPR012328">
    <property type="entry name" value="Chalcone/stilbene_synt_C"/>
</dbReference>
<dbReference type="InterPro" id="IPR001099">
    <property type="entry name" value="Chalcone/stilbene_synt_N"/>
</dbReference>
<dbReference type="InterPro" id="IPR018088">
    <property type="entry name" value="Chalcone/stilbene_synthase_AS"/>
</dbReference>
<dbReference type="InterPro" id="IPR011141">
    <property type="entry name" value="Polyketide_synthase_type-III"/>
</dbReference>
<dbReference type="InterPro" id="IPR016039">
    <property type="entry name" value="Thiolase-like"/>
</dbReference>
<dbReference type="PANTHER" id="PTHR11877:SF80">
    <property type="entry name" value="CHALCONE SYNTHASE 1"/>
    <property type="match status" value="1"/>
</dbReference>
<dbReference type="PANTHER" id="PTHR11877">
    <property type="entry name" value="HYDROXYMETHYLGLUTARYL-COA SYNTHASE"/>
    <property type="match status" value="1"/>
</dbReference>
<dbReference type="Pfam" id="PF02797">
    <property type="entry name" value="Chal_sti_synt_C"/>
    <property type="match status" value="1"/>
</dbReference>
<dbReference type="Pfam" id="PF00195">
    <property type="entry name" value="Chal_sti_synt_N"/>
    <property type="match status" value="1"/>
</dbReference>
<dbReference type="PIRSF" id="PIRSF000451">
    <property type="entry name" value="PKS_III"/>
    <property type="match status" value="1"/>
</dbReference>
<dbReference type="SUPFAM" id="SSF53901">
    <property type="entry name" value="Thiolase-like"/>
    <property type="match status" value="2"/>
</dbReference>
<dbReference type="PROSITE" id="PS00441">
    <property type="entry name" value="CHALCONE_SYNTH"/>
    <property type="match status" value="1"/>
</dbReference>
<keyword id="KW-0012">Acyltransferase</keyword>
<keyword id="KW-0284">Flavonoid biosynthesis</keyword>
<keyword id="KW-0808">Transferase</keyword>
<name>CHSJ_PETHY</name>
<organism>
    <name type="scientific">Petunia hybrida</name>
    <name type="common">Petunia</name>
    <dbReference type="NCBI Taxonomy" id="4102"/>
    <lineage>
        <taxon>Eukaryota</taxon>
        <taxon>Viridiplantae</taxon>
        <taxon>Streptophyta</taxon>
        <taxon>Embryophyta</taxon>
        <taxon>Tracheophyta</taxon>
        <taxon>Spermatophyta</taxon>
        <taxon>Magnoliopsida</taxon>
        <taxon>eudicotyledons</taxon>
        <taxon>Gunneridae</taxon>
        <taxon>Pentapetalae</taxon>
        <taxon>asterids</taxon>
        <taxon>lamiids</taxon>
        <taxon>Solanales</taxon>
        <taxon>Solanaceae</taxon>
        <taxon>Petunioideae</taxon>
        <taxon>Petunia</taxon>
    </lineage>
</organism>